<feature type="chain" id="PRO_0000427955" description="3-methyl-2-oxobutanoate dehydrogenase subunit alpha">
    <location>
        <begin position="1"/>
        <end position="367"/>
    </location>
</feature>
<feature type="binding site" evidence="1">
    <location>
        <begin position="99"/>
        <end position="101"/>
    </location>
    <ligand>
        <name>thiamine diphosphate</name>
        <dbReference type="ChEBI" id="CHEBI:58937"/>
    </ligand>
</feature>
<feature type="binding site" evidence="1">
    <location>
        <position position="100"/>
    </location>
    <ligand>
        <name>substrate</name>
    </ligand>
</feature>
<feature type="binding site" evidence="1">
    <location>
        <begin position="141"/>
        <end position="142"/>
    </location>
    <ligand>
        <name>thiamine diphosphate</name>
        <dbReference type="ChEBI" id="CHEBI:58937"/>
    </ligand>
</feature>
<feature type="binding site" evidence="1">
    <location>
        <begin position="170"/>
        <end position="176"/>
    </location>
    <ligand>
        <name>thiamine diphosphate</name>
        <dbReference type="ChEBI" id="CHEBI:58937"/>
    </ligand>
</feature>
<feature type="binding site" evidence="1">
    <location>
        <position position="171"/>
    </location>
    <ligand>
        <name>Mg(2+)</name>
        <dbReference type="ChEBI" id="CHEBI:18420"/>
    </ligand>
</feature>
<feature type="binding site" evidence="1">
    <location>
        <begin position="200"/>
        <end position="204"/>
    </location>
    <ligand>
        <name>thiamine diphosphate</name>
        <dbReference type="ChEBI" id="CHEBI:58937"/>
    </ligand>
</feature>
<feature type="binding site" evidence="1">
    <location>
        <position position="200"/>
    </location>
    <ligand>
        <name>Mg(2+)</name>
        <dbReference type="ChEBI" id="CHEBI:18420"/>
    </ligand>
</feature>
<feature type="binding site" evidence="1">
    <location>
        <position position="269"/>
    </location>
    <ligand>
        <name>thiamine diphosphate</name>
        <dbReference type="ChEBI" id="CHEBI:58937"/>
    </ligand>
</feature>
<evidence type="ECO:0000250" key="1"/>
<gene>
    <name type="primary">bkdA</name>
    <name type="synonym">pdhA</name>
    <name type="ordered locus">MT2572</name>
</gene>
<accession>P9WIS2</accession>
<accession>F2GH61</accession>
<accession>L0T9Z4</accession>
<accession>O06161</accession>
<accession>Q7D714</accession>
<comment type="function">
    <text evidence="1">Component of the branched-chain alpha-ketoacid dehydrogenase (BCKADH) complex, that catalyzes the overall conversion of branched-chain alpha-ketoacids to acyl-CoA and CO(2).</text>
</comment>
<comment type="catalytic activity">
    <reaction>
        <text>N(6)-[(R)-lipoyl]-L-lysyl-[protein] + 3-methyl-2-oxobutanoate + H(+) = N(6)-[(R)-S(8)-2-methylpropanoyldihydrolipoyl]-L-lysyl-[protein] + CO2</text>
        <dbReference type="Rhea" id="RHEA:13457"/>
        <dbReference type="Rhea" id="RHEA-COMP:10474"/>
        <dbReference type="Rhea" id="RHEA-COMP:10497"/>
        <dbReference type="ChEBI" id="CHEBI:11851"/>
        <dbReference type="ChEBI" id="CHEBI:15378"/>
        <dbReference type="ChEBI" id="CHEBI:16526"/>
        <dbReference type="ChEBI" id="CHEBI:83099"/>
        <dbReference type="ChEBI" id="CHEBI:83142"/>
        <dbReference type="EC" id="1.2.4.4"/>
    </reaction>
</comment>
<comment type="cofactor">
    <cofactor evidence="1">
        <name>Mg(2+)</name>
        <dbReference type="ChEBI" id="CHEBI:18420"/>
    </cofactor>
</comment>
<comment type="cofactor">
    <cofactor evidence="1">
        <name>thiamine diphosphate</name>
        <dbReference type="ChEBI" id="CHEBI:58937"/>
    </cofactor>
</comment>
<comment type="subunit">
    <text evidence="1">Heteromer of E1 alpha (BkdA) and beta (BkdB) subunits. Part of the BCKADH complex, consisting of multiple copies of BkdA/BkdB (E1), BkdC (E2) and Lpd (E3) (By similarity).</text>
</comment>
<keyword id="KW-0460">Magnesium</keyword>
<keyword id="KW-0479">Metal-binding</keyword>
<keyword id="KW-0560">Oxidoreductase</keyword>
<keyword id="KW-1185">Reference proteome</keyword>
<keyword id="KW-0786">Thiamine pyrophosphate</keyword>
<protein>
    <recommendedName>
        <fullName>3-methyl-2-oxobutanoate dehydrogenase subunit alpha</fullName>
        <ecNumber>1.2.4.4</ecNumber>
    </recommendedName>
    <alternativeName>
        <fullName>Branched-chain alpha-ketoacid dehydrogenase E1 component subunit alpha</fullName>
        <shortName>BCKADH E1-alpha</shortName>
    </alternativeName>
</protein>
<reference key="1">
    <citation type="journal article" date="2002" name="J. Bacteriol.">
        <title>Whole-genome comparison of Mycobacterium tuberculosis clinical and laboratory strains.</title>
        <authorList>
            <person name="Fleischmann R.D."/>
            <person name="Alland D."/>
            <person name="Eisen J.A."/>
            <person name="Carpenter L."/>
            <person name="White O."/>
            <person name="Peterson J.D."/>
            <person name="DeBoy R.T."/>
            <person name="Dodson R.J."/>
            <person name="Gwinn M.L."/>
            <person name="Haft D.H."/>
            <person name="Hickey E.K."/>
            <person name="Kolonay J.F."/>
            <person name="Nelson W.C."/>
            <person name="Umayam L.A."/>
            <person name="Ermolaeva M.D."/>
            <person name="Salzberg S.L."/>
            <person name="Delcher A."/>
            <person name="Utterback T.R."/>
            <person name="Weidman J.F."/>
            <person name="Khouri H.M."/>
            <person name="Gill J."/>
            <person name="Mikula A."/>
            <person name="Bishai W."/>
            <person name="Jacobs W.R. Jr."/>
            <person name="Venter J.C."/>
            <person name="Fraser C.M."/>
        </authorList>
    </citation>
    <scope>NUCLEOTIDE SEQUENCE [LARGE SCALE GENOMIC DNA]</scope>
    <source>
        <strain>CDC 1551 / Oshkosh</strain>
    </source>
</reference>
<proteinExistence type="inferred from homology"/>
<organism>
    <name type="scientific">Mycobacterium tuberculosis (strain CDC 1551 / Oshkosh)</name>
    <dbReference type="NCBI Taxonomy" id="83331"/>
    <lineage>
        <taxon>Bacteria</taxon>
        <taxon>Bacillati</taxon>
        <taxon>Actinomycetota</taxon>
        <taxon>Actinomycetes</taxon>
        <taxon>Mycobacteriales</taxon>
        <taxon>Mycobacteriaceae</taxon>
        <taxon>Mycobacterium</taxon>
        <taxon>Mycobacterium tuberculosis complex</taxon>
    </lineage>
</organism>
<name>BKDA_MYCTO</name>
<dbReference type="EC" id="1.2.4.4"/>
<dbReference type="EMBL" id="AE000516">
    <property type="protein sequence ID" value="AAK46876.1"/>
    <property type="molecule type" value="Genomic_DNA"/>
</dbReference>
<dbReference type="PIR" id="A70550">
    <property type="entry name" value="A70550"/>
</dbReference>
<dbReference type="RefSeq" id="WP_003412761.1">
    <property type="nucleotide sequence ID" value="NZ_KK341227.1"/>
</dbReference>
<dbReference type="SMR" id="P9WIS2"/>
<dbReference type="GeneID" id="45426491"/>
<dbReference type="KEGG" id="mtc:MT2572"/>
<dbReference type="PATRIC" id="fig|83331.31.peg.2774"/>
<dbReference type="HOGENOM" id="CLU_029393_1_0_11"/>
<dbReference type="Proteomes" id="UP000001020">
    <property type="component" value="Chromosome"/>
</dbReference>
<dbReference type="GO" id="GO:0003863">
    <property type="term" value="F:3-methyl-2-oxobutanoate dehydrogenase (2-methylpropanoyl-transferring) activity"/>
    <property type="evidence" value="ECO:0007669"/>
    <property type="project" value="UniProtKB-EC"/>
</dbReference>
<dbReference type="GO" id="GO:0000287">
    <property type="term" value="F:magnesium ion binding"/>
    <property type="evidence" value="ECO:0007669"/>
    <property type="project" value="UniProtKB-ARBA"/>
</dbReference>
<dbReference type="GO" id="GO:0009083">
    <property type="term" value="P:branched-chain amino acid catabolic process"/>
    <property type="evidence" value="ECO:0007669"/>
    <property type="project" value="TreeGrafter"/>
</dbReference>
<dbReference type="CDD" id="cd02000">
    <property type="entry name" value="TPP_E1_PDC_ADC_BCADC"/>
    <property type="match status" value="1"/>
</dbReference>
<dbReference type="Gene3D" id="3.40.50.970">
    <property type="match status" value="1"/>
</dbReference>
<dbReference type="InterPro" id="IPR050771">
    <property type="entry name" value="Alpha-ketoacid_DH_E1_comp"/>
</dbReference>
<dbReference type="InterPro" id="IPR001017">
    <property type="entry name" value="DH_E1"/>
</dbReference>
<dbReference type="InterPro" id="IPR017596">
    <property type="entry name" value="PdhA/BkdA"/>
</dbReference>
<dbReference type="InterPro" id="IPR029061">
    <property type="entry name" value="THDP-binding"/>
</dbReference>
<dbReference type="NCBIfam" id="TIGR03181">
    <property type="entry name" value="PDH_E1_alph_x"/>
    <property type="match status" value="1"/>
</dbReference>
<dbReference type="PANTHER" id="PTHR43380">
    <property type="entry name" value="2-OXOISOVALERATE DEHYDROGENASE SUBUNIT ALPHA, MITOCHONDRIAL"/>
    <property type="match status" value="1"/>
</dbReference>
<dbReference type="PANTHER" id="PTHR43380:SF1">
    <property type="entry name" value="2-OXOISOVALERATE DEHYDROGENASE SUBUNIT ALPHA, MITOCHONDRIAL"/>
    <property type="match status" value="1"/>
</dbReference>
<dbReference type="Pfam" id="PF00676">
    <property type="entry name" value="E1_dh"/>
    <property type="match status" value="1"/>
</dbReference>
<dbReference type="SUPFAM" id="SSF52518">
    <property type="entry name" value="Thiamin diphosphate-binding fold (THDP-binding)"/>
    <property type="match status" value="1"/>
</dbReference>
<sequence length="367" mass="40616">MGEGSRRPSGMLMSVDLEPVQLVGPDGTPTAERRYHRDLPEETLRWLYEMMVVTRELDTEFVNLQRQGELALYTPCRGQEAAQVGAAACLRKTDWLFPQYRELGVYLVRGIPPGHVGVAWRGTWHGGLQFTTKCCAPMSVPIGTQTLHAVGAAMAAQRLDEDSVTVAFLGDGATSEGDVHEALNFAAVFTTPCVFYVQNNQWAISMPVSRQTAAPSIAHKAIGYGMPGIRVDGNDVLACYAVMAEAAARARAGDGPTLIEAVTYRLGPHTTADDPTRYRSQEEVDRWATLDPIPRYRTYLQDQGLWSQRLEEQVTARAKHVRSELRDAVFDAPDFDVDEVFTTVYAEITPGLQAQREQLRAELARTD</sequence>